<reference key="1">
    <citation type="journal article" date="2001" name="Science">
        <title>Comparative genomics of Listeria species.</title>
        <authorList>
            <person name="Glaser P."/>
            <person name="Frangeul L."/>
            <person name="Buchrieser C."/>
            <person name="Rusniok C."/>
            <person name="Amend A."/>
            <person name="Baquero F."/>
            <person name="Berche P."/>
            <person name="Bloecker H."/>
            <person name="Brandt P."/>
            <person name="Chakraborty T."/>
            <person name="Charbit A."/>
            <person name="Chetouani F."/>
            <person name="Couve E."/>
            <person name="de Daruvar A."/>
            <person name="Dehoux P."/>
            <person name="Domann E."/>
            <person name="Dominguez-Bernal G."/>
            <person name="Duchaud E."/>
            <person name="Durant L."/>
            <person name="Dussurget O."/>
            <person name="Entian K.-D."/>
            <person name="Fsihi H."/>
            <person name="Garcia-del Portillo F."/>
            <person name="Garrido P."/>
            <person name="Gautier L."/>
            <person name="Goebel W."/>
            <person name="Gomez-Lopez N."/>
            <person name="Hain T."/>
            <person name="Hauf J."/>
            <person name="Jackson D."/>
            <person name="Jones L.-M."/>
            <person name="Kaerst U."/>
            <person name="Kreft J."/>
            <person name="Kuhn M."/>
            <person name="Kunst F."/>
            <person name="Kurapkat G."/>
            <person name="Madueno E."/>
            <person name="Maitournam A."/>
            <person name="Mata Vicente J."/>
            <person name="Ng E."/>
            <person name="Nedjari H."/>
            <person name="Nordsiek G."/>
            <person name="Novella S."/>
            <person name="de Pablos B."/>
            <person name="Perez-Diaz J.-C."/>
            <person name="Purcell R."/>
            <person name="Remmel B."/>
            <person name="Rose M."/>
            <person name="Schlueter T."/>
            <person name="Simoes N."/>
            <person name="Tierrez A."/>
            <person name="Vazquez-Boland J.-A."/>
            <person name="Voss H."/>
            <person name="Wehland J."/>
            <person name="Cossart P."/>
        </authorList>
    </citation>
    <scope>NUCLEOTIDE SEQUENCE [LARGE SCALE GENOMIC DNA]</scope>
    <source>
        <strain>ATCC BAA-680 / CLIP 11262</strain>
    </source>
</reference>
<comment type="function">
    <text evidence="1">Catalyzes the conversion of glucosamine-6-phosphate to glucosamine-1-phosphate.</text>
</comment>
<comment type="catalytic activity">
    <reaction evidence="1">
        <text>alpha-D-glucosamine 1-phosphate = D-glucosamine 6-phosphate</text>
        <dbReference type="Rhea" id="RHEA:23424"/>
        <dbReference type="ChEBI" id="CHEBI:58516"/>
        <dbReference type="ChEBI" id="CHEBI:58725"/>
        <dbReference type="EC" id="5.4.2.10"/>
    </reaction>
</comment>
<comment type="cofactor">
    <cofactor evidence="1">
        <name>Mg(2+)</name>
        <dbReference type="ChEBI" id="CHEBI:18420"/>
    </cofactor>
    <text evidence="1">Binds 1 Mg(2+) ion per subunit.</text>
</comment>
<comment type="PTM">
    <text evidence="1">Activated by phosphorylation.</text>
</comment>
<comment type="similarity">
    <text evidence="1">Belongs to the phosphohexose mutase family.</text>
</comment>
<keyword id="KW-0413">Isomerase</keyword>
<keyword id="KW-0460">Magnesium</keyword>
<keyword id="KW-0479">Metal-binding</keyword>
<keyword id="KW-0597">Phosphoprotein</keyword>
<proteinExistence type="inferred from homology"/>
<protein>
    <recommendedName>
        <fullName evidence="1">Phosphoglucosamine mutase</fullName>
        <ecNumber evidence="1">5.4.2.10</ecNumber>
    </recommendedName>
</protein>
<gene>
    <name evidence="1" type="primary">glmM</name>
    <name type="ordered locus">lin2223</name>
</gene>
<accession>Q929Q1</accession>
<organism>
    <name type="scientific">Listeria innocua serovar 6a (strain ATCC BAA-680 / CLIP 11262)</name>
    <dbReference type="NCBI Taxonomy" id="272626"/>
    <lineage>
        <taxon>Bacteria</taxon>
        <taxon>Bacillati</taxon>
        <taxon>Bacillota</taxon>
        <taxon>Bacilli</taxon>
        <taxon>Bacillales</taxon>
        <taxon>Listeriaceae</taxon>
        <taxon>Listeria</taxon>
    </lineage>
</organism>
<feature type="chain" id="PRO_0000147910" description="Phosphoglucosamine mutase">
    <location>
        <begin position="1"/>
        <end position="450"/>
    </location>
</feature>
<feature type="active site" description="Phosphoserine intermediate" evidence="1">
    <location>
        <position position="101"/>
    </location>
</feature>
<feature type="binding site" description="via phosphate group" evidence="1">
    <location>
        <position position="101"/>
    </location>
    <ligand>
        <name>Mg(2+)</name>
        <dbReference type="ChEBI" id="CHEBI:18420"/>
    </ligand>
</feature>
<feature type="binding site" evidence="1">
    <location>
        <position position="241"/>
    </location>
    <ligand>
        <name>Mg(2+)</name>
        <dbReference type="ChEBI" id="CHEBI:18420"/>
    </ligand>
</feature>
<feature type="binding site" evidence="1">
    <location>
        <position position="243"/>
    </location>
    <ligand>
        <name>Mg(2+)</name>
        <dbReference type="ChEBI" id="CHEBI:18420"/>
    </ligand>
</feature>
<feature type="binding site" evidence="1">
    <location>
        <position position="245"/>
    </location>
    <ligand>
        <name>Mg(2+)</name>
        <dbReference type="ChEBI" id="CHEBI:18420"/>
    </ligand>
</feature>
<feature type="modified residue" description="Phosphoserine" evidence="1">
    <location>
        <position position="101"/>
    </location>
</feature>
<sequence>MGKYFGTDGVRGVANSELTPELAFRLGRMGGYVLTRHVGEHPRVLVARDTRISGEMLESALIAGLVSVGIEVMRLGVISTPGVAYLTKAQGASASVMISASHNPVDDNGIKFFGSDGFKLSDDQEEEIEQLLDTAEDTLPRPSGEGLGTVSDYFEGKQKYIQYLKQTIENDFNGYHIALDCANGATSGLATHLFADLDADISSMGASPNGLNINDGVGSTHPEALAAFVLDKKADVGLAFDGDGDRVIAIDEIGQIVDGDKIMFICAKYLREQGLLNSNTIVSTVMSNLGFYKGLRELEIEDVQTAVGDRYVVEAMREGNYNLGGEQSGHIIFLDHNTTGDGLLSGIQLINVMKATGKKLSELASEMKTFPQKLENIRVSDKNHVTDNPKVSKVISEVEAEMAGNGRVLVRPSGTEPLVRVMVEAATKEATDEYCERISAVVRSEMALND</sequence>
<evidence type="ECO:0000255" key="1">
    <source>
        <dbReference type="HAMAP-Rule" id="MF_01554"/>
    </source>
</evidence>
<name>GLMM_LISIN</name>
<dbReference type="EC" id="5.4.2.10" evidence="1"/>
<dbReference type="EMBL" id="AL596171">
    <property type="protein sequence ID" value="CAC97452.1"/>
    <property type="molecule type" value="Genomic_DNA"/>
</dbReference>
<dbReference type="PIR" id="AD1710">
    <property type="entry name" value="AD1710"/>
</dbReference>
<dbReference type="RefSeq" id="WP_003763407.1">
    <property type="nucleotide sequence ID" value="NC_003212.1"/>
</dbReference>
<dbReference type="SMR" id="Q929Q1"/>
<dbReference type="STRING" id="272626.gene:17566581"/>
<dbReference type="GeneID" id="93235563"/>
<dbReference type="KEGG" id="lin:lin2223"/>
<dbReference type="eggNOG" id="COG1109">
    <property type="taxonomic scope" value="Bacteria"/>
</dbReference>
<dbReference type="HOGENOM" id="CLU_016950_7_0_9"/>
<dbReference type="OrthoDB" id="9806956at2"/>
<dbReference type="Proteomes" id="UP000002513">
    <property type="component" value="Chromosome"/>
</dbReference>
<dbReference type="GO" id="GO:0005829">
    <property type="term" value="C:cytosol"/>
    <property type="evidence" value="ECO:0007669"/>
    <property type="project" value="TreeGrafter"/>
</dbReference>
<dbReference type="GO" id="GO:0000287">
    <property type="term" value="F:magnesium ion binding"/>
    <property type="evidence" value="ECO:0007669"/>
    <property type="project" value="UniProtKB-UniRule"/>
</dbReference>
<dbReference type="GO" id="GO:0008966">
    <property type="term" value="F:phosphoglucosamine mutase activity"/>
    <property type="evidence" value="ECO:0007669"/>
    <property type="project" value="UniProtKB-UniRule"/>
</dbReference>
<dbReference type="GO" id="GO:0004615">
    <property type="term" value="F:phosphomannomutase activity"/>
    <property type="evidence" value="ECO:0007669"/>
    <property type="project" value="TreeGrafter"/>
</dbReference>
<dbReference type="GO" id="GO:0005975">
    <property type="term" value="P:carbohydrate metabolic process"/>
    <property type="evidence" value="ECO:0007669"/>
    <property type="project" value="InterPro"/>
</dbReference>
<dbReference type="GO" id="GO:0009252">
    <property type="term" value="P:peptidoglycan biosynthetic process"/>
    <property type="evidence" value="ECO:0007669"/>
    <property type="project" value="TreeGrafter"/>
</dbReference>
<dbReference type="GO" id="GO:0006048">
    <property type="term" value="P:UDP-N-acetylglucosamine biosynthetic process"/>
    <property type="evidence" value="ECO:0007669"/>
    <property type="project" value="TreeGrafter"/>
</dbReference>
<dbReference type="CDD" id="cd05802">
    <property type="entry name" value="GlmM"/>
    <property type="match status" value="1"/>
</dbReference>
<dbReference type="FunFam" id="3.30.310.50:FF:000001">
    <property type="entry name" value="Phosphoglucosamine mutase"/>
    <property type="match status" value="1"/>
</dbReference>
<dbReference type="FunFam" id="3.40.120.10:FF:000001">
    <property type="entry name" value="Phosphoglucosamine mutase"/>
    <property type="match status" value="1"/>
</dbReference>
<dbReference type="FunFam" id="3.40.120.10:FF:000002">
    <property type="entry name" value="Phosphoglucosamine mutase"/>
    <property type="match status" value="1"/>
</dbReference>
<dbReference type="Gene3D" id="3.40.120.10">
    <property type="entry name" value="Alpha-D-Glucose-1,6-Bisphosphate, subunit A, domain 3"/>
    <property type="match status" value="3"/>
</dbReference>
<dbReference type="Gene3D" id="3.30.310.50">
    <property type="entry name" value="Alpha-D-phosphohexomutase, C-terminal domain"/>
    <property type="match status" value="1"/>
</dbReference>
<dbReference type="HAMAP" id="MF_01554_B">
    <property type="entry name" value="GlmM_B"/>
    <property type="match status" value="1"/>
</dbReference>
<dbReference type="InterPro" id="IPR005844">
    <property type="entry name" value="A-D-PHexomutase_a/b/a-I"/>
</dbReference>
<dbReference type="InterPro" id="IPR016055">
    <property type="entry name" value="A-D-PHexomutase_a/b/a-I/II/III"/>
</dbReference>
<dbReference type="InterPro" id="IPR005845">
    <property type="entry name" value="A-D-PHexomutase_a/b/a-II"/>
</dbReference>
<dbReference type="InterPro" id="IPR005846">
    <property type="entry name" value="A-D-PHexomutase_a/b/a-III"/>
</dbReference>
<dbReference type="InterPro" id="IPR005843">
    <property type="entry name" value="A-D-PHexomutase_C"/>
</dbReference>
<dbReference type="InterPro" id="IPR036900">
    <property type="entry name" value="A-D-PHexomutase_C_sf"/>
</dbReference>
<dbReference type="InterPro" id="IPR016066">
    <property type="entry name" value="A-D-PHexomutase_CS"/>
</dbReference>
<dbReference type="InterPro" id="IPR005841">
    <property type="entry name" value="Alpha-D-phosphohexomutase_SF"/>
</dbReference>
<dbReference type="InterPro" id="IPR018247">
    <property type="entry name" value="EF_Hand_1_Ca_BS"/>
</dbReference>
<dbReference type="InterPro" id="IPR006352">
    <property type="entry name" value="GlmM_bact"/>
</dbReference>
<dbReference type="InterPro" id="IPR050060">
    <property type="entry name" value="Phosphoglucosamine_mutase"/>
</dbReference>
<dbReference type="NCBIfam" id="TIGR01455">
    <property type="entry name" value="glmM"/>
    <property type="match status" value="1"/>
</dbReference>
<dbReference type="NCBIfam" id="NF008139">
    <property type="entry name" value="PRK10887.1"/>
    <property type="match status" value="1"/>
</dbReference>
<dbReference type="PANTHER" id="PTHR42946:SF1">
    <property type="entry name" value="PHOSPHOGLUCOMUTASE (ALPHA-D-GLUCOSE-1,6-BISPHOSPHATE-DEPENDENT)"/>
    <property type="match status" value="1"/>
</dbReference>
<dbReference type="PANTHER" id="PTHR42946">
    <property type="entry name" value="PHOSPHOHEXOSE MUTASE"/>
    <property type="match status" value="1"/>
</dbReference>
<dbReference type="Pfam" id="PF02878">
    <property type="entry name" value="PGM_PMM_I"/>
    <property type="match status" value="1"/>
</dbReference>
<dbReference type="Pfam" id="PF02879">
    <property type="entry name" value="PGM_PMM_II"/>
    <property type="match status" value="1"/>
</dbReference>
<dbReference type="Pfam" id="PF02880">
    <property type="entry name" value="PGM_PMM_III"/>
    <property type="match status" value="1"/>
</dbReference>
<dbReference type="Pfam" id="PF00408">
    <property type="entry name" value="PGM_PMM_IV"/>
    <property type="match status" value="1"/>
</dbReference>
<dbReference type="PRINTS" id="PR00509">
    <property type="entry name" value="PGMPMM"/>
</dbReference>
<dbReference type="SUPFAM" id="SSF55957">
    <property type="entry name" value="Phosphoglucomutase, C-terminal domain"/>
    <property type="match status" value="1"/>
</dbReference>
<dbReference type="SUPFAM" id="SSF53738">
    <property type="entry name" value="Phosphoglucomutase, first 3 domains"/>
    <property type="match status" value="3"/>
</dbReference>
<dbReference type="PROSITE" id="PS00710">
    <property type="entry name" value="PGM_PMM"/>
    <property type="match status" value="1"/>
</dbReference>